<sequence length="718" mass="78934">MALALSVAPTSSSLSSLLSRTPNPSPNFRTTHLNFGSQRRIYTINPLLRSFKCLQSSSRDVNASPFSISAIASSSSSSQTTELVPYKLQRLVKEFKSLTEPIDRLKWVLHYASLLPQMPESSKTESNRVMGCTARVWLDAELGQDGKMRFCADSDSDVSKGMCSCLIQVLDEASPVEVMELKTEDLAELNVGLLGGERSRVNTWYNVLVSMQKKTRRLVAEREGKVPSFEPFPSLVLTAHGIEAKGSFAQAQAKYLFPEESRVEELVNVLKEKKIGVVAHFYMDPEVQGVLTAAQKHWPHISISDSLVMADSAVTMAKAGCQFITVLGVDFMSENVRAILDQAGFEKVGVYRMSDETIGCSLADAASAPAYLNYLEAASRSPPSLHVVYINTSLETKAFAHELVPTITCTSSNVVQTILQAFAQMPELTVWYGPDSYMGANIVKLFQQMTLMTNEEIANIHPKHSLDSIKSLLPRLHYFQEGTCIVHHLFGHEVVERIKYMYCDAFLTAHLEVPGEMFSLAMEAKKREMGVVGSTQNILDFIKQKVQEAVDRNVDDHLQFVLGTESGMVTSIVAVIRSLLGSSANSKLKVEVVFPVSSDSMTKTSSDSSNSIKVGDVALPVVPGVAGGEGCSIHGGCASCPYMKMNSLSSLLKVCHKLPDLENVYGGFIAERFKRQTPQGKLIADVGCEPILHMRHFQANKELPDKLVHQVLSCESKR</sequence>
<reference key="1">
    <citation type="journal article" date="2000" name="DNA Res.">
        <title>Structural analysis of Arabidopsis thaliana chromosome 5. X. Sequence features of the regions of 3,076,755 bp covered by sixty P1 and TAC clones.</title>
        <authorList>
            <person name="Sato S."/>
            <person name="Nakamura Y."/>
            <person name="Kaneko T."/>
            <person name="Katoh T."/>
            <person name="Asamizu E."/>
            <person name="Kotani H."/>
            <person name="Tabata S."/>
        </authorList>
    </citation>
    <scope>NUCLEOTIDE SEQUENCE [LARGE SCALE GENOMIC DNA]</scope>
    <source>
        <strain>cv. Columbia</strain>
    </source>
</reference>
<reference key="2">
    <citation type="journal article" date="2017" name="Plant J.">
        <title>Araport11: a complete reannotation of the Arabidopsis thaliana reference genome.</title>
        <authorList>
            <person name="Cheng C.Y."/>
            <person name="Krishnakumar V."/>
            <person name="Chan A.P."/>
            <person name="Thibaud-Nissen F."/>
            <person name="Schobel S."/>
            <person name="Town C.D."/>
        </authorList>
    </citation>
    <scope>GENOME REANNOTATION</scope>
    <source>
        <strain>cv. Columbia</strain>
    </source>
</reference>
<reference key="3">
    <citation type="journal article" date="2003" name="Science">
        <title>Empirical analysis of transcriptional activity in the Arabidopsis genome.</title>
        <authorList>
            <person name="Yamada K."/>
            <person name="Lim J."/>
            <person name="Dale J.M."/>
            <person name="Chen H."/>
            <person name="Shinn P."/>
            <person name="Palm C.J."/>
            <person name="Southwick A.M."/>
            <person name="Wu H.C."/>
            <person name="Kim C.J."/>
            <person name="Nguyen M."/>
            <person name="Pham P.K."/>
            <person name="Cheuk R.F."/>
            <person name="Karlin-Newmann G."/>
            <person name="Liu S.X."/>
            <person name="Lam B."/>
            <person name="Sakano H."/>
            <person name="Wu T."/>
            <person name="Yu G."/>
            <person name="Miranda M."/>
            <person name="Quach H.L."/>
            <person name="Tripp M."/>
            <person name="Chang C.H."/>
            <person name="Lee J.M."/>
            <person name="Toriumi M.J."/>
            <person name="Chan M.M."/>
            <person name="Tang C.C."/>
            <person name="Onodera C.S."/>
            <person name="Deng J.M."/>
            <person name="Akiyama K."/>
            <person name="Ansari Y."/>
            <person name="Arakawa T."/>
            <person name="Banh J."/>
            <person name="Banno F."/>
            <person name="Bowser L."/>
            <person name="Brooks S.Y."/>
            <person name="Carninci P."/>
            <person name="Chao Q."/>
            <person name="Choy N."/>
            <person name="Enju A."/>
            <person name="Goldsmith A.D."/>
            <person name="Gurjal M."/>
            <person name="Hansen N.F."/>
            <person name="Hayashizaki Y."/>
            <person name="Johnson-Hopson C."/>
            <person name="Hsuan V.W."/>
            <person name="Iida K."/>
            <person name="Karnes M."/>
            <person name="Khan S."/>
            <person name="Koesema E."/>
            <person name="Ishida J."/>
            <person name="Jiang P.X."/>
            <person name="Jones T."/>
            <person name="Kawai J."/>
            <person name="Kamiya A."/>
            <person name="Meyers C."/>
            <person name="Nakajima M."/>
            <person name="Narusaka M."/>
            <person name="Seki M."/>
            <person name="Sakurai T."/>
            <person name="Satou M."/>
            <person name="Tamse R."/>
            <person name="Vaysberg M."/>
            <person name="Wallender E.K."/>
            <person name="Wong C."/>
            <person name="Yamamura Y."/>
            <person name="Yuan S."/>
            <person name="Shinozaki K."/>
            <person name="Davis R.W."/>
            <person name="Theologis A."/>
            <person name="Ecker J.R."/>
        </authorList>
    </citation>
    <scope>NUCLEOTIDE SEQUENCE [LARGE SCALE MRNA]</scope>
    <source>
        <strain>cv. Columbia</strain>
    </source>
</reference>
<reference key="4">
    <citation type="submission" date="2002-03" db="EMBL/GenBank/DDBJ databases">
        <title>Full-length cDNA from Arabidopsis thaliana.</title>
        <authorList>
            <person name="Brover V.V."/>
            <person name="Troukhan M.E."/>
            <person name="Alexandrov N.A."/>
            <person name="Lu Y.-P."/>
            <person name="Flavell R.B."/>
            <person name="Feldmann K.A."/>
        </authorList>
    </citation>
    <scope>NUCLEOTIDE SEQUENCE [LARGE SCALE MRNA]</scope>
</reference>
<reference key="5">
    <citation type="journal article" date="2006" name="Plant Physiol.">
        <title>Early steps in the biosynthesis of NAD in Arabidopsis start with aspartate and occur in the plastid.</title>
        <authorList>
            <person name="Katoh A."/>
            <person name="Uenohara K."/>
            <person name="Akita M."/>
            <person name="Hashimoto T."/>
        </authorList>
    </citation>
    <scope>FUNCTION</scope>
    <scope>SUBCELLULAR LOCATION</scope>
    <scope>DISRUPTION PHENOTYPE</scope>
</reference>
<reference key="6">
    <citation type="journal article" date="2007" name="J. Biol. Chem.">
        <title>Characterization of Arabidopsis thaliana SufE2 and SufE3: functions in chloroplast iron-sulfur cluster assembly and Nad synthesis.</title>
        <authorList>
            <person name="Narayana Murthy U.M."/>
            <person name="Ollagnier-de-Choudens S."/>
            <person name="Sanakis Y."/>
            <person name="Abdel-Ghany S.E."/>
            <person name="Rousset C."/>
            <person name="Ye H."/>
            <person name="Fontecave M."/>
            <person name="Pilon-Smits E.A."/>
            <person name="Pilon M."/>
        </authorList>
    </citation>
    <scope>FUNCTION</scope>
    <scope>CATALYTIC ACTIVITY</scope>
    <scope>ACTIVE SITE</scope>
    <scope>PATHWAY</scope>
    <scope>COFACTOR</scope>
    <scope>SUBUNIT</scope>
    <scope>SUBCELLULAR LOCATION</scope>
    <scope>TISSUE SPECIFICITY</scope>
    <scope>DISRUPTION PHENOTYPE</scope>
    <scope>MUTAGENESIS OF CYS-132</scope>
</reference>
<reference key="7">
    <citation type="journal article" date="2008" name="Plant Cell">
        <title>The Arabidopsis onset of leaf death5 mutation of quinolinate synthase affects nicotinamide adenine dinucleotide biosynthesis and causes early ageing.</title>
        <authorList>
            <person name="Schippers J.H."/>
            <person name="Nunes-Nesi A."/>
            <person name="Apetrei R."/>
            <person name="Hille J."/>
            <person name="Fernie A.R."/>
            <person name="Dijkwel P.P."/>
        </authorList>
    </citation>
    <scope>FUNCTION</scope>
    <scope>CATALYTIC ACTIVITY</scope>
    <scope>PATHWAY</scope>
    <scope>MUTAGENESIS OF PRO-101</scope>
    <scope>3D-STRUCTURE MODELING</scope>
    <scope>INTERACTION WITH NFS2; CPNIFS3 AND AO</scope>
    <source>
        <strain>cv. Landsberg erecta</strain>
    </source>
</reference>
<reference key="8">
    <citation type="journal article" date="2012" name="Mol. Cell. Proteomics">
        <title>Comparative large-scale characterisation of plant vs. mammal proteins reveals similar and idiosyncratic N-alpha acetylation features.</title>
        <authorList>
            <person name="Bienvenut W.V."/>
            <person name="Sumpton D."/>
            <person name="Martinez A."/>
            <person name="Lilla S."/>
            <person name="Espagne C."/>
            <person name="Meinnel T."/>
            <person name="Giglione C."/>
        </authorList>
    </citation>
    <scope>CLEAVAGE OF TRANSIT PEPTIDE [LARGE SCALE ANALYSIS] AFTER ALA-70</scope>
    <scope>IDENTIFICATION BY MASS SPECTROMETRY [LARGE SCALE ANALYSIS]</scope>
</reference>
<dbReference type="EC" id="2.5.1.72" evidence="4"/>
<dbReference type="EMBL" id="AB024031">
    <property type="protein sequence ID" value="BAB09392.1"/>
    <property type="molecule type" value="Genomic_DNA"/>
</dbReference>
<dbReference type="EMBL" id="CP002688">
    <property type="protein sequence ID" value="AED95912.1"/>
    <property type="molecule type" value="Genomic_DNA"/>
</dbReference>
<dbReference type="EMBL" id="AY035115">
    <property type="protein sequence ID" value="AAK59620.1"/>
    <property type="molecule type" value="mRNA"/>
</dbReference>
<dbReference type="EMBL" id="AY113860">
    <property type="protein sequence ID" value="AAM44908.1"/>
    <property type="molecule type" value="mRNA"/>
</dbReference>
<dbReference type="EMBL" id="AY085553">
    <property type="protein sequence ID" value="AAM62776.1"/>
    <property type="molecule type" value="mRNA"/>
</dbReference>
<dbReference type="RefSeq" id="NP_199832.1">
    <property type="nucleotide sequence ID" value="NM_124400.3"/>
</dbReference>
<dbReference type="SMR" id="Q9FGS4"/>
<dbReference type="FunCoup" id="Q9FGS4">
    <property type="interactions" value="345"/>
</dbReference>
<dbReference type="STRING" id="3702.Q9FGS4"/>
<dbReference type="GlyGen" id="Q9FGS4">
    <property type="glycosylation" value="1 site"/>
</dbReference>
<dbReference type="SwissPalm" id="Q9FGS4"/>
<dbReference type="PaxDb" id="3702-AT5G50210.1"/>
<dbReference type="ProteomicsDB" id="251234"/>
<dbReference type="EnsemblPlants" id="AT5G50210.1">
    <property type="protein sequence ID" value="AT5G50210.1"/>
    <property type="gene ID" value="AT5G50210"/>
</dbReference>
<dbReference type="GeneID" id="835086"/>
<dbReference type="Gramene" id="AT5G50210.1">
    <property type="protein sequence ID" value="AT5G50210.1"/>
    <property type="gene ID" value="AT5G50210"/>
</dbReference>
<dbReference type="KEGG" id="ath:AT5G50210"/>
<dbReference type="Araport" id="AT5G50210"/>
<dbReference type="TAIR" id="AT5G50210">
    <property type="gene designation" value="QS"/>
</dbReference>
<dbReference type="eggNOG" id="ENOG502QPQ6">
    <property type="taxonomic scope" value="Eukaryota"/>
</dbReference>
<dbReference type="HOGENOM" id="CLU_020092_1_0_1"/>
<dbReference type="InParanoid" id="Q9FGS4"/>
<dbReference type="OMA" id="MRFWADS"/>
<dbReference type="OrthoDB" id="66991at2759"/>
<dbReference type="PhylomeDB" id="Q9FGS4"/>
<dbReference type="BioCyc" id="ARA:AT5G50210-MONOMER"/>
<dbReference type="BioCyc" id="MetaCyc:AT5G50210-MONOMER"/>
<dbReference type="UniPathway" id="UPA00253">
    <property type="reaction ID" value="UER00327"/>
</dbReference>
<dbReference type="PRO" id="PR:Q9FGS4"/>
<dbReference type="Proteomes" id="UP000006548">
    <property type="component" value="Chromosome 5"/>
</dbReference>
<dbReference type="ExpressionAtlas" id="Q9FGS4">
    <property type="expression patterns" value="baseline and differential"/>
</dbReference>
<dbReference type="GO" id="GO:0009507">
    <property type="term" value="C:chloroplast"/>
    <property type="evidence" value="ECO:0000314"/>
    <property type="project" value="TAIR"/>
</dbReference>
<dbReference type="GO" id="GO:0051539">
    <property type="term" value="F:4 iron, 4 sulfur cluster binding"/>
    <property type="evidence" value="ECO:0000314"/>
    <property type="project" value="TAIR"/>
</dbReference>
<dbReference type="GO" id="GO:0008047">
    <property type="term" value="F:enzyme activator activity"/>
    <property type="evidence" value="ECO:0000314"/>
    <property type="project" value="TAIR"/>
</dbReference>
<dbReference type="GO" id="GO:0046872">
    <property type="term" value="F:metal ion binding"/>
    <property type="evidence" value="ECO:0007669"/>
    <property type="project" value="UniProtKB-KW"/>
</dbReference>
<dbReference type="GO" id="GO:0042803">
    <property type="term" value="F:protein homodimerization activity"/>
    <property type="evidence" value="ECO:0000314"/>
    <property type="project" value="TAIR"/>
</dbReference>
<dbReference type="GO" id="GO:0008987">
    <property type="term" value="F:quinolinate synthetase A activity"/>
    <property type="evidence" value="ECO:0000315"/>
    <property type="project" value="TAIR"/>
</dbReference>
<dbReference type="GO" id="GO:0009060">
    <property type="term" value="P:aerobic respiration"/>
    <property type="evidence" value="ECO:0000315"/>
    <property type="project" value="TAIR"/>
</dbReference>
<dbReference type="GO" id="GO:0016226">
    <property type="term" value="P:iron-sulfur cluster assembly"/>
    <property type="evidence" value="ECO:0000305"/>
    <property type="project" value="TAIR"/>
</dbReference>
<dbReference type="GO" id="GO:0009435">
    <property type="term" value="P:NAD biosynthetic process"/>
    <property type="evidence" value="ECO:0000315"/>
    <property type="project" value="TAIR"/>
</dbReference>
<dbReference type="GO" id="GO:0051176">
    <property type="term" value="P:positive regulation of sulfur metabolic process"/>
    <property type="evidence" value="ECO:0000314"/>
    <property type="project" value="TAIR"/>
</dbReference>
<dbReference type="FunFam" id="3.40.50.10800:FF:000008">
    <property type="entry name" value="Quinolinate synthase chloroplastic"/>
    <property type="match status" value="1"/>
</dbReference>
<dbReference type="FunFam" id="3.40.50.10800:FF:000006">
    <property type="entry name" value="Quinolinate synthase, chloroplastic"/>
    <property type="match status" value="1"/>
</dbReference>
<dbReference type="FunFam" id="3.40.50.10800:FF:000009">
    <property type="entry name" value="Quinolinate synthase, chloroplastic"/>
    <property type="match status" value="1"/>
</dbReference>
<dbReference type="FunFam" id="3.90.1010.10:FF:000010">
    <property type="entry name" value="Quinolinate synthase, chloroplastic"/>
    <property type="match status" value="1"/>
</dbReference>
<dbReference type="Gene3D" id="3.90.1010.10">
    <property type="match status" value="1"/>
</dbReference>
<dbReference type="Gene3D" id="3.40.50.10800">
    <property type="entry name" value="NadA-like"/>
    <property type="match status" value="3"/>
</dbReference>
<dbReference type="InterPro" id="IPR003808">
    <property type="entry name" value="Fe-S_metab-assoc_dom"/>
</dbReference>
<dbReference type="InterPro" id="IPR003473">
    <property type="entry name" value="NadA"/>
</dbReference>
<dbReference type="InterPro" id="IPR036094">
    <property type="entry name" value="NadA_sf"/>
</dbReference>
<dbReference type="PANTHER" id="PTHR30573:SF0">
    <property type="entry name" value="QUINOLINATE SYNTHASE, CHLOROPLASTIC"/>
    <property type="match status" value="1"/>
</dbReference>
<dbReference type="PANTHER" id="PTHR30573">
    <property type="entry name" value="QUINOLINATE SYNTHETASE A"/>
    <property type="match status" value="1"/>
</dbReference>
<dbReference type="Pfam" id="PF02445">
    <property type="entry name" value="NadA"/>
    <property type="match status" value="1"/>
</dbReference>
<dbReference type="Pfam" id="PF02657">
    <property type="entry name" value="SufE"/>
    <property type="match status" value="1"/>
</dbReference>
<dbReference type="SUPFAM" id="SSF142754">
    <property type="entry name" value="NadA-like"/>
    <property type="match status" value="1"/>
</dbReference>
<dbReference type="SUPFAM" id="SSF82649">
    <property type="entry name" value="SufE/NifU"/>
    <property type="match status" value="1"/>
</dbReference>
<gene>
    <name evidence="6" type="primary">QS</name>
    <name evidence="8" type="synonym">OLD5</name>
    <name evidence="7" type="synonym">SUFE3</name>
    <name evidence="12" type="ordered locus">At5g50210</name>
    <name evidence="13" type="ORF">K6A12.7</name>
</gene>
<proteinExistence type="evidence at protein level"/>
<evidence type="ECO:0000250" key="1">
    <source>
        <dbReference type="UniProtKB" id="O57767"/>
    </source>
</evidence>
<evidence type="ECO:0000256" key="2">
    <source>
        <dbReference type="SAM" id="MobiDB-lite"/>
    </source>
</evidence>
<evidence type="ECO:0000269" key="3">
    <source>
    </source>
</evidence>
<evidence type="ECO:0000269" key="4">
    <source>
    </source>
</evidence>
<evidence type="ECO:0000269" key="5">
    <source>
    </source>
</evidence>
<evidence type="ECO:0000303" key="6">
    <source>
    </source>
</evidence>
<evidence type="ECO:0000303" key="7">
    <source>
    </source>
</evidence>
<evidence type="ECO:0000303" key="8">
    <source>
    </source>
</evidence>
<evidence type="ECO:0000305" key="9"/>
<evidence type="ECO:0000305" key="10">
    <source>
    </source>
</evidence>
<evidence type="ECO:0000305" key="11">
    <source>
    </source>
</evidence>
<evidence type="ECO:0000312" key="12">
    <source>
        <dbReference type="Araport" id="AT5G50210"/>
    </source>
</evidence>
<evidence type="ECO:0000312" key="13">
    <source>
        <dbReference type="EMBL" id="BAB09392.1"/>
    </source>
</evidence>
<evidence type="ECO:0007744" key="14">
    <source>
    </source>
</evidence>
<keyword id="KW-0004">4Fe-4S</keyword>
<keyword id="KW-0150">Chloroplast</keyword>
<keyword id="KW-0408">Iron</keyword>
<keyword id="KW-0411">Iron-sulfur</keyword>
<keyword id="KW-0479">Metal-binding</keyword>
<keyword id="KW-0934">Plastid</keyword>
<keyword id="KW-0662">Pyridine nucleotide biosynthesis</keyword>
<keyword id="KW-1185">Reference proteome</keyword>
<keyword id="KW-0808">Transferase</keyword>
<keyword id="KW-0809">Transit peptide</keyword>
<organism>
    <name type="scientific">Arabidopsis thaliana</name>
    <name type="common">Mouse-ear cress</name>
    <dbReference type="NCBI Taxonomy" id="3702"/>
    <lineage>
        <taxon>Eukaryota</taxon>
        <taxon>Viridiplantae</taxon>
        <taxon>Streptophyta</taxon>
        <taxon>Embryophyta</taxon>
        <taxon>Tracheophyta</taxon>
        <taxon>Spermatophyta</taxon>
        <taxon>Magnoliopsida</taxon>
        <taxon>eudicotyledons</taxon>
        <taxon>Gunneridae</taxon>
        <taxon>Pentapetalae</taxon>
        <taxon>rosids</taxon>
        <taxon>malvids</taxon>
        <taxon>Brassicales</taxon>
        <taxon>Brassicaceae</taxon>
        <taxon>Camelineae</taxon>
        <taxon>Arabidopsis</taxon>
    </lineage>
</organism>
<feature type="transit peptide" description="Chloroplast" evidence="14">
    <location>
        <begin position="1"/>
        <end position="70"/>
    </location>
</feature>
<feature type="chain" id="PRO_0000423476" description="Quinolinate synthase, chloroplastic">
    <location>
        <begin position="71"/>
        <end position="718"/>
    </location>
</feature>
<feature type="region of interest" description="Disordered" evidence="2">
    <location>
        <begin position="1"/>
        <end position="29"/>
    </location>
</feature>
<feature type="compositionally biased region" description="Low complexity" evidence="2">
    <location>
        <begin position="1"/>
        <end position="22"/>
    </location>
</feature>
<feature type="active site" description="Cysteine persulfide intermediate" evidence="7">
    <location>
        <position position="132"/>
    </location>
</feature>
<feature type="binding site" evidence="1">
    <location>
        <position position="280"/>
    </location>
    <ligand>
        <name>iminosuccinate</name>
        <dbReference type="ChEBI" id="CHEBI:77875"/>
    </ligand>
</feature>
<feature type="binding site" evidence="1">
    <location>
        <position position="306"/>
    </location>
    <ligand>
        <name>iminosuccinate</name>
        <dbReference type="ChEBI" id="CHEBI:77875"/>
    </ligand>
</feature>
<feature type="binding site" evidence="1">
    <location>
        <position position="360"/>
    </location>
    <ligand>
        <name>[4Fe-4S] cluster</name>
        <dbReference type="ChEBI" id="CHEBI:49883"/>
    </ligand>
</feature>
<feature type="binding site" evidence="1">
    <location>
        <begin position="389"/>
        <end position="391"/>
    </location>
    <ligand>
        <name>iminosuccinate</name>
        <dbReference type="ChEBI" id="CHEBI:77875"/>
    </ligand>
</feature>
<feature type="binding site" evidence="1">
    <location>
        <position position="411"/>
    </location>
    <ligand>
        <name>iminosuccinate</name>
        <dbReference type="ChEBI" id="CHEBI:77875"/>
    </ligand>
</feature>
<feature type="binding site" evidence="1">
    <location>
        <position position="484"/>
    </location>
    <ligand>
        <name>[4Fe-4S] cluster</name>
        <dbReference type="ChEBI" id="CHEBI:49883"/>
    </ligand>
</feature>
<feature type="binding site" evidence="1">
    <location>
        <begin position="510"/>
        <end position="512"/>
    </location>
    <ligand>
        <name>iminosuccinate</name>
        <dbReference type="ChEBI" id="CHEBI:77875"/>
    </ligand>
</feature>
<feature type="binding site" evidence="1">
    <location>
        <position position="535"/>
    </location>
    <ligand>
        <name>iminosuccinate</name>
        <dbReference type="ChEBI" id="CHEBI:77875"/>
    </ligand>
</feature>
<feature type="binding site" evidence="1">
    <location>
        <position position="640"/>
    </location>
    <ligand>
        <name>[4Fe-4S] cluster</name>
        <dbReference type="ChEBI" id="CHEBI:49883"/>
    </ligand>
</feature>
<feature type="mutagenesis site" description="In old5; early senescence, high levels of tricarboxylic acid cycle intermediates and nitrogen-containing amino acids, decreased stimulation of the Cys desulfurase activity of NFS2, and increased respiration rate and antioxidant accumulation." evidence="5">
    <original>P</original>
    <variation>S</variation>
    <location>
        <position position="101"/>
    </location>
</feature>
<feature type="mutagenesis site" description="Loss of quinolinate synthase activity." evidence="4">
    <original>C</original>
    <variation>S</variation>
    <location>
        <position position="132"/>
    </location>
</feature>
<comment type="function">
    <text evidence="3 4 5">Catalyzes the condensation of iminoaspartate with dihydroxyacetone phosphate to form quinolinate. Can complement nadA-deficient E.coli mutant. Essential for the de novo synthesis of NAD. Also participates in cysteine desulfurization mediated by NFS2. Can activate the cysteine desulfurase activity of NFS2 in vitro.</text>
</comment>
<comment type="catalytic activity">
    <reaction evidence="4 5">
        <text>iminosuccinate + dihydroxyacetone phosphate = quinolinate + phosphate + 2 H2O + H(+)</text>
        <dbReference type="Rhea" id="RHEA:25888"/>
        <dbReference type="ChEBI" id="CHEBI:15377"/>
        <dbReference type="ChEBI" id="CHEBI:15378"/>
        <dbReference type="ChEBI" id="CHEBI:29959"/>
        <dbReference type="ChEBI" id="CHEBI:43474"/>
        <dbReference type="ChEBI" id="CHEBI:57642"/>
        <dbReference type="ChEBI" id="CHEBI:77875"/>
        <dbReference type="EC" id="2.5.1.72"/>
    </reaction>
</comment>
<comment type="cofactor">
    <cofactor evidence="4">
        <name>[4Fe-4S] cluster</name>
        <dbReference type="ChEBI" id="CHEBI:49883"/>
    </cofactor>
    <text evidence="4">Binds 1 [4Fe-4S] cluster per subunit.</text>
</comment>
<comment type="pathway">
    <text evidence="4 5">Cofactor biosynthesis; NAD(+) biosynthesis; quinolinate from iminoaspartate: step 1/1.</text>
</comment>
<comment type="subunit">
    <text evidence="4 5 11">Homodimer (PubMed:17452319). Interacts in vitro with NFS2, CpNIFS3 and AO (PubMed:18978034). Part of a Cys defulfurase complex (Probable).</text>
</comment>
<comment type="subcellular location">
    <subcellularLocation>
        <location evidence="3 4">Plastid</location>
        <location evidence="3 4">Chloroplast</location>
    </subcellularLocation>
</comment>
<comment type="tissue specificity">
    <text evidence="4">Expressed in roots, leaves, stems and flowers.</text>
</comment>
<comment type="disruption phenotype">
    <text evidence="3 4">Embryonic lethality when homozygous.</text>
</comment>
<comment type="miscellaneous">
    <text evidence="10">The highly oxygen-sensitive (4Fe-4S) cluster at its NadA domain, can be reconstituted by its own SufE domain in the presence of NFS2, cysteine and ferrous iron.</text>
</comment>
<comment type="similarity">
    <text evidence="9">Belongs to the quinolinate synthase family. Type 1 subfamily.</text>
</comment>
<protein>
    <recommendedName>
        <fullName evidence="6">Quinolinate synthase, chloroplastic</fullName>
        <ecNumber evidence="4">2.5.1.72</ecNumber>
    </recommendedName>
    <alternativeName>
        <fullName evidence="8">Protein ONSET OF LEAF DEATH 5</fullName>
    </alternativeName>
    <alternativeName>
        <fullName evidence="7">Protein SULFUR E 3</fullName>
    </alternativeName>
</protein>
<accession>Q9FGS4</accession>
<name>NADA_ARATH</name>